<comment type="function">
    <text evidence="1">Required for the formation of a threonylcarbamoyl group on adenosine at position 37 (t(6)A37) in tRNAs that read codons beginning with adenine. Is involved in the transfer of the threonylcarbamoyl moiety of threonylcarbamoyl-AMP (TC-AMP) to the N6 group of A37, together with TsaE and TsaB. TsaD likely plays a direct catalytic role in this reaction.</text>
</comment>
<comment type="catalytic activity">
    <reaction evidence="1">
        <text>L-threonylcarbamoyladenylate + adenosine(37) in tRNA = N(6)-L-threonylcarbamoyladenosine(37) in tRNA + AMP + H(+)</text>
        <dbReference type="Rhea" id="RHEA:37059"/>
        <dbReference type="Rhea" id="RHEA-COMP:10162"/>
        <dbReference type="Rhea" id="RHEA-COMP:10163"/>
        <dbReference type="ChEBI" id="CHEBI:15378"/>
        <dbReference type="ChEBI" id="CHEBI:73682"/>
        <dbReference type="ChEBI" id="CHEBI:74411"/>
        <dbReference type="ChEBI" id="CHEBI:74418"/>
        <dbReference type="ChEBI" id="CHEBI:456215"/>
        <dbReference type="EC" id="2.3.1.234"/>
    </reaction>
</comment>
<comment type="cofactor">
    <cofactor evidence="1">
        <name>Fe(2+)</name>
        <dbReference type="ChEBI" id="CHEBI:29033"/>
    </cofactor>
    <text evidence="1">Binds 1 Fe(2+) ion per subunit.</text>
</comment>
<comment type="subcellular location">
    <subcellularLocation>
        <location evidence="1">Cytoplasm</location>
    </subcellularLocation>
</comment>
<comment type="similarity">
    <text evidence="1">Belongs to the KAE1 / TsaD family.</text>
</comment>
<keyword id="KW-0012">Acyltransferase</keyword>
<keyword id="KW-0963">Cytoplasm</keyword>
<keyword id="KW-0408">Iron</keyword>
<keyword id="KW-0479">Metal-binding</keyword>
<keyword id="KW-0808">Transferase</keyword>
<keyword id="KW-0819">tRNA processing</keyword>
<name>TSAD_ECOSM</name>
<accession>B1LF56</accession>
<proteinExistence type="inferred from homology"/>
<reference key="1">
    <citation type="journal article" date="2008" name="J. Bacteriol.">
        <title>Insights into the environmental resistance gene pool from the genome sequence of the multidrug-resistant environmental isolate Escherichia coli SMS-3-5.</title>
        <authorList>
            <person name="Fricke W.F."/>
            <person name="Wright M.S."/>
            <person name="Lindell A.H."/>
            <person name="Harkins D.M."/>
            <person name="Baker-Austin C."/>
            <person name="Ravel J."/>
            <person name="Stepanauskas R."/>
        </authorList>
    </citation>
    <scope>NUCLEOTIDE SEQUENCE [LARGE SCALE GENOMIC DNA]</scope>
    <source>
        <strain>SMS-3-5 / SECEC</strain>
    </source>
</reference>
<dbReference type="EC" id="2.3.1.234" evidence="1"/>
<dbReference type="EMBL" id="CP000970">
    <property type="protein sequence ID" value="ACB18102.1"/>
    <property type="molecule type" value="Genomic_DNA"/>
</dbReference>
<dbReference type="RefSeq" id="WP_001264374.1">
    <property type="nucleotide sequence ID" value="NC_010498.1"/>
</dbReference>
<dbReference type="SMR" id="B1LF56"/>
<dbReference type="KEGG" id="ecm:EcSMS35_3357"/>
<dbReference type="HOGENOM" id="CLU_023208_0_2_6"/>
<dbReference type="Proteomes" id="UP000007011">
    <property type="component" value="Chromosome"/>
</dbReference>
<dbReference type="GO" id="GO:0005737">
    <property type="term" value="C:cytoplasm"/>
    <property type="evidence" value="ECO:0007669"/>
    <property type="project" value="UniProtKB-SubCell"/>
</dbReference>
<dbReference type="GO" id="GO:0005506">
    <property type="term" value="F:iron ion binding"/>
    <property type="evidence" value="ECO:0007669"/>
    <property type="project" value="UniProtKB-UniRule"/>
</dbReference>
<dbReference type="GO" id="GO:0061711">
    <property type="term" value="F:N(6)-L-threonylcarbamoyladenine synthase activity"/>
    <property type="evidence" value="ECO:0007669"/>
    <property type="project" value="UniProtKB-EC"/>
</dbReference>
<dbReference type="GO" id="GO:0002949">
    <property type="term" value="P:tRNA threonylcarbamoyladenosine modification"/>
    <property type="evidence" value="ECO:0007669"/>
    <property type="project" value="UniProtKB-UniRule"/>
</dbReference>
<dbReference type="CDD" id="cd24097">
    <property type="entry name" value="ASKHA_NBD_TsaD-like"/>
    <property type="match status" value="1"/>
</dbReference>
<dbReference type="FunFam" id="3.30.420.40:FF:000031">
    <property type="entry name" value="tRNA N6-adenosine threonylcarbamoyltransferase"/>
    <property type="match status" value="1"/>
</dbReference>
<dbReference type="Gene3D" id="3.30.420.40">
    <property type="match status" value="2"/>
</dbReference>
<dbReference type="HAMAP" id="MF_01445">
    <property type="entry name" value="TsaD"/>
    <property type="match status" value="1"/>
</dbReference>
<dbReference type="InterPro" id="IPR043129">
    <property type="entry name" value="ATPase_NBD"/>
</dbReference>
<dbReference type="InterPro" id="IPR000905">
    <property type="entry name" value="Gcp-like_dom"/>
</dbReference>
<dbReference type="InterPro" id="IPR017861">
    <property type="entry name" value="KAE1/TsaD"/>
</dbReference>
<dbReference type="InterPro" id="IPR017860">
    <property type="entry name" value="Peptidase_M22_CS"/>
</dbReference>
<dbReference type="InterPro" id="IPR022450">
    <property type="entry name" value="TsaD"/>
</dbReference>
<dbReference type="NCBIfam" id="TIGR00329">
    <property type="entry name" value="gcp_kae1"/>
    <property type="match status" value="1"/>
</dbReference>
<dbReference type="NCBIfam" id="TIGR03723">
    <property type="entry name" value="T6A_TsaD_YgjD"/>
    <property type="match status" value="1"/>
</dbReference>
<dbReference type="PANTHER" id="PTHR11735">
    <property type="entry name" value="TRNA N6-ADENOSINE THREONYLCARBAMOYLTRANSFERASE"/>
    <property type="match status" value="1"/>
</dbReference>
<dbReference type="PANTHER" id="PTHR11735:SF6">
    <property type="entry name" value="TRNA N6-ADENOSINE THREONYLCARBAMOYLTRANSFERASE, MITOCHONDRIAL"/>
    <property type="match status" value="1"/>
</dbReference>
<dbReference type="Pfam" id="PF00814">
    <property type="entry name" value="TsaD"/>
    <property type="match status" value="1"/>
</dbReference>
<dbReference type="PRINTS" id="PR00789">
    <property type="entry name" value="OSIALOPTASE"/>
</dbReference>
<dbReference type="SUPFAM" id="SSF53067">
    <property type="entry name" value="Actin-like ATPase domain"/>
    <property type="match status" value="1"/>
</dbReference>
<dbReference type="PROSITE" id="PS01016">
    <property type="entry name" value="GLYCOPROTEASE"/>
    <property type="match status" value="1"/>
</dbReference>
<protein>
    <recommendedName>
        <fullName evidence="1">tRNA N6-adenosine threonylcarbamoyltransferase</fullName>
        <ecNumber evidence="1">2.3.1.234</ecNumber>
    </recommendedName>
    <alternativeName>
        <fullName evidence="1">N6-L-threonylcarbamoyladenine synthase</fullName>
        <shortName evidence="1">t(6)A synthase</shortName>
    </alternativeName>
    <alternativeName>
        <fullName evidence="1">t(6)A37 threonylcarbamoyladenosine biosynthesis protein TsaD</fullName>
    </alternativeName>
    <alternativeName>
        <fullName evidence="1">tRNA threonylcarbamoyladenosine biosynthesis protein TsaD</fullName>
    </alternativeName>
</protein>
<sequence>MRVLGIETSCDETGIAIYDDEKGLLANQLYSQVKLHADYGGVVPELASRDHVRKTVPLIQEALKESGLTAKDIDAVAYTAGPGLVGALLVGATVGRSLAFAWDVPAIPVHHMEGHLLAPMLEDNPPAFPFVALLVSGGHTQLISVTGIGQYELLGESIDDAAGEAFDKTAKLLGLDYPGGPLLSKMAAQGTAGRFVFPRPMTDRPGLDFSFSGLKTFAANTIRDNGTDDQTRADIARAFEDAVVDTLMIKCKRALDQTGFKRLVMAGGVSANRTLRAKLAEMMKKRRGEVFYARPEFCTDNGAMIAYAGMVRFKAGATADLGVSVRPRWPLAELPAA</sequence>
<gene>
    <name evidence="1" type="primary">tsaD</name>
    <name type="synonym">gcp</name>
    <name type="ordered locus">EcSMS35_3357</name>
</gene>
<feature type="chain" id="PRO_1000145981" description="tRNA N6-adenosine threonylcarbamoyltransferase">
    <location>
        <begin position="1"/>
        <end position="337"/>
    </location>
</feature>
<feature type="binding site" evidence="1">
    <location>
        <position position="111"/>
    </location>
    <ligand>
        <name>Fe cation</name>
        <dbReference type="ChEBI" id="CHEBI:24875"/>
    </ligand>
</feature>
<feature type="binding site" evidence="1">
    <location>
        <position position="115"/>
    </location>
    <ligand>
        <name>Fe cation</name>
        <dbReference type="ChEBI" id="CHEBI:24875"/>
    </ligand>
</feature>
<feature type="binding site" evidence="1">
    <location>
        <begin position="134"/>
        <end position="138"/>
    </location>
    <ligand>
        <name>substrate</name>
    </ligand>
</feature>
<feature type="binding site" evidence="1">
    <location>
        <position position="167"/>
    </location>
    <ligand>
        <name>substrate</name>
    </ligand>
</feature>
<feature type="binding site" evidence="1">
    <location>
        <position position="180"/>
    </location>
    <ligand>
        <name>substrate</name>
    </ligand>
</feature>
<feature type="binding site" evidence="1">
    <location>
        <position position="272"/>
    </location>
    <ligand>
        <name>substrate</name>
    </ligand>
</feature>
<feature type="binding site" evidence="1">
    <location>
        <position position="300"/>
    </location>
    <ligand>
        <name>Fe cation</name>
        <dbReference type="ChEBI" id="CHEBI:24875"/>
    </ligand>
</feature>
<organism>
    <name type="scientific">Escherichia coli (strain SMS-3-5 / SECEC)</name>
    <dbReference type="NCBI Taxonomy" id="439855"/>
    <lineage>
        <taxon>Bacteria</taxon>
        <taxon>Pseudomonadati</taxon>
        <taxon>Pseudomonadota</taxon>
        <taxon>Gammaproteobacteria</taxon>
        <taxon>Enterobacterales</taxon>
        <taxon>Enterobacteriaceae</taxon>
        <taxon>Escherichia</taxon>
    </lineage>
</organism>
<evidence type="ECO:0000255" key="1">
    <source>
        <dbReference type="HAMAP-Rule" id="MF_01445"/>
    </source>
</evidence>